<feature type="signal peptide" evidence="1">
    <location>
        <begin position="1"/>
        <end position="24"/>
    </location>
</feature>
<feature type="chain" id="PRO_0000036225" description="Outer membrane protein assembly factor BamD">
    <location>
        <begin position="25"/>
        <end position="305"/>
    </location>
</feature>
<feature type="repeat" description="TPR 1">
    <location>
        <begin position="41"/>
        <end position="74"/>
    </location>
</feature>
<feature type="repeat" description="TPR 2">
    <location>
        <begin position="78"/>
        <end position="111"/>
    </location>
</feature>
<feature type="repeat" description="TPR 3">
    <location>
        <begin position="113"/>
        <end position="136"/>
    </location>
</feature>
<feature type="repeat" description="TPR 4">
    <location>
        <begin position="174"/>
        <end position="207"/>
    </location>
</feature>
<feature type="lipid moiety-binding region" description="N-palmitoyl cysteine" evidence="1">
    <location>
        <position position="25"/>
    </location>
</feature>
<feature type="lipid moiety-binding region" description="S-diacylglycerol cysteine" evidence="1">
    <location>
        <position position="25"/>
    </location>
</feature>
<comment type="function">
    <text evidence="1">Part of the outer membrane protein assembly complex, which is involved in assembly and insertion of beta-barrel proteins into the outer membrane.</text>
</comment>
<comment type="subunit">
    <text evidence="1">Part of the Bam complex.</text>
</comment>
<comment type="subcellular location">
    <subcellularLocation>
        <location evidence="1">Cell outer membrane</location>
        <topology evidence="1">Lipid-anchor</topology>
    </subcellularLocation>
</comment>
<comment type="similarity">
    <text evidence="1">Belongs to the BamD family.</text>
</comment>
<gene>
    <name evidence="1" type="primary">bamD</name>
    <name type="ordered locus">CC_1984</name>
</gene>
<keyword id="KW-0998">Cell outer membrane</keyword>
<keyword id="KW-0449">Lipoprotein</keyword>
<keyword id="KW-0472">Membrane</keyword>
<keyword id="KW-0564">Palmitate</keyword>
<keyword id="KW-1185">Reference proteome</keyword>
<keyword id="KW-0677">Repeat</keyword>
<keyword id="KW-0732">Signal</keyword>
<keyword id="KW-0802">TPR repeat</keyword>
<sequence length="305" mass="34154">MLRIFQGRPAVTIAAVLVAASVAGCAGKAKKPTLVYEERPVELLYSTGADRLDRGNWNEAVDYFREVERQHPYSEWSRRSILMTGYAHYMGNQYAEAIGDADRFISLYPGNPSAQYAFYLKAICYFEQIVDVNRDQAATEQALAALRDVVQRYPNTEYATDARLKIDMVNDQLAGKEMAIGRWYLKNGQTLAAIGRFKAVIERHQTTSHTPEALFRLVEAYLTIGLNEEAKRNGAVLGYNFPGDRWYVDAYRLLNDNGLRPAVEPLKAGAKRNALERILSKDKEATLAPPGERKAKKGLLGPLGM</sequence>
<accession>Q9A6U9</accession>
<protein>
    <recommendedName>
        <fullName evidence="1">Outer membrane protein assembly factor BamD</fullName>
    </recommendedName>
</protein>
<reference key="1">
    <citation type="journal article" date="2001" name="Proc. Natl. Acad. Sci. U.S.A.">
        <title>Complete genome sequence of Caulobacter crescentus.</title>
        <authorList>
            <person name="Nierman W.C."/>
            <person name="Feldblyum T.V."/>
            <person name="Laub M.T."/>
            <person name="Paulsen I.T."/>
            <person name="Nelson K.E."/>
            <person name="Eisen J.A."/>
            <person name="Heidelberg J.F."/>
            <person name="Alley M.R.K."/>
            <person name="Ohta N."/>
            <person name="Maddock J.R."/>
            <person name="Potocka I."/>
            <person name="Nelson W.C."/>
            <person name="Newton A."/>
            <person name="Stephens C."/>
            <person name="Phadke N.D."/>
            <person name="Ely B."/>
            <person name="DeBoy R.T."/>
            <person name="Dodson R.J."/>
            <person name="Durkin A.S."/>
            <person name="Gwinn M.L."/>
            <person name="Haft D.H."/>
            <person name="Kolonay J.F."/>
            <person name="Smit J."/>
            <person name="Craven M.B."/>
            <person name="Khouri H.M."/>
            <person name="Shetty J."/>
            <person name="Berry K.J."/>
            <person name="Utterback T.R."/>
            <person name="Tran K."/>
            <person name="Wolf A.M."/>
            <person name="Vamathevan J.J."/>
            <person name="Ermolaeva M.D."/>
            <person name="White O."/>
            <person name="Salzberg S.L."/>
            <person name="Venter J.C."/>
            <person name="Shapiro L."/>
            <person name="Fraser C.M."/>
        </authorList>
    </citation>
    <scope>NUCLEOTIDE SEQUENCE [LARGE SCALE GENOMIC DNA]</scope>
    <source>
        <strain>ATCC 19089 / CIP 103742 / CB 15</strain>
    </source>
</reference>
<dbReference type="EMBL" id="AE005673">
    <property type="protein sequence ID" value="AAK23959.1"/>
    <property type="molecule type" value="Genomic_DNA"/>
</dbReference>
<dbReference type="PIR" id="C87495">
    <property type="entry name" value="C87495"/>
</dbReference>
<dbReference type="RefSeq" id="NP_420791.1">
    <property type="nucleotide sequence ID" value="NC_002696.2"/>
</dbReference>
<dbReference type="SMR" id="Q9A6U9"/>
<dbReference type="STRING" id="190650.CC_1984"/>
<dbReference type="TCDB" id="1.B.33.1.4">
    <property type="family name" value="the outer membrane protein insertion porin (bam complex) (ompip) family"/>
</dbReference>
<dbReference type="DNASU" id="942763"/>
<dbReference type="EnsemblBacteria" id="AAK23959">
    <property type="protein sequence ID" value="AAK23959"/>
    <property type="gene ID" value="CC_1984"/>
</dbReference>
<dbReference type="KEGG" id="ccr:CC_1984"/>
<dbReference type="PATRIC" id="fig|190650.5.peg.2002"/>
<dbReference type="eggNOG" id="COG4105">
    <property type="taxonomic scope" value="Bacteria"/>
</dbReference>
<dbReference type="HOGENOM" id="CLU_065982_1_1_5"/>
<dbReference type="BioCyc" id="CAULO:CC1984-MONOMER"/>
<dbReference type="Proteomes" id="UP000001816">
    <property type="component" value="Chromosome"/>
</dbReference>
<dbReference type="GO" id="GO:1990063">
    <property type="term" value="C:Bam protein complex"/>
    <property type="evidence" value="ECO:0007669"/>
    <property type="project" value="TreeGrafter"/>
</dbReference>
<dbReference type="GO" id="GO:0043165">
    <property type="term" value="P:Gram-negative-bacterium-type cell outer membrane assembly"/>
    <property type="evidence" value="ECO:0007669"/>
    <property type="project" value="UniProtKB-UniRule"/>
</dbReference>
<dbReference type="GO" id="GO:0051205">
    <property type="term" value="P:protein insertion into membrane"/>
    <property type="evidence" value="ECO:0007669"/>
    <property type="project" value="UniProtKB-UniRule"/>
</dbReference>
<dbReference type="CDD" id="cd15830">
    <property type="entry name" value="BamD"/>
    <property type="match status" value="1"/>
</dbReference>
<dbReference type="Gene3D" id="1.25.40.10">
    <property type="entry name" value="Tetratricopeptide repeat domain"/>
    <property type="match status" value="1"/>
</dbReference>
<dbReference type="HAMAP" id="MF_00922">
    <property type="entry name" value="OM_assembly_BamD"/>
    <property type="match status" value="1"/>
</dbReference>
<dbReference type="InterPro" id="IPR017689">
    <property type="entry name" value="BamD"/>
</dbReference>
<dbReference type="InterPro" id="IPR039565">
    <property type="entry name" value="BamD-like"/>
</dbReference>
<dbReference type="InterPro" id="IPR011990">
    <property type="entry name" value="TPR-like_helical_dom_sf"/>
</dbReference>
<dbReference type="InterPro" id="IPR019734">
    <property type="entry name" value="TPR_rpt"/>
</dbReference>
<dbReference type="NCBIfam" id="TIGR03302">
    <property type="entry name" value="OM_YfiO"/>
    <property type="match status" value="1"/>
</dbReference>
<dbReference type="PANTHER" id="PTHR37423:SF1">
    <property type="entry name" value="OUTER MEMBRANE PROTEIN ASSEMBLY FACTOR BAMD"/>
    <property type="match status" value="1"/>
</dbReference>
<dbReference type="PANTHER" id="PTHR37423">
    <property type="entry name" value="SOLUBLE LYTIC MUREIN TRANSGLYCOSYLASE-RELATED"/>
    <property type="match status" value="1"/>
</dbReference>
<dbReference type="Pfam" id="PF13525">
    <property type="entry name" value="YfiO"/>
    <property type="match status" value="1"/>
</dbReference>
<dbReference type="SUPFAM" id="SSF48452">
    <property type="entry name" value="TPR-like"/>
    <property type="match status" value="1"/>
</dbReference>
<dbReference type="PROSITE" id="PS51257">
    <property type="entry name" value="PROKAR_LIPOPROTEIN"/>
    <property type="match status" value="1"/>
</dbReference>
<dbReference type="PROSITE" id="PS50005">
    <property type="entry name" value="TPR"/>
    <property type="match status" value="3"/>
</dbReference>
<dbReference type="PROSITE" id="PS50293">
    <property type="entry name" value="TPR_REGION"/>
    <property type="match status" value="1"/>
</dbReference>
<organism>
    <name type="scientific">Caulobacter vibrioides (strain ATCC 19089 / CIP 103742 / CB 15)</name>
    <name type="common">Caulobacter crescentus</name>
    <dbReference type="NCBI Taxonomy" id="190650"/>
    <lineage>
        <taxon>Bacteria</taxon>
        <taxon>Pseudomonadati</taxon>
        <taxon>Pseudomonadota</taxon>
        <taxon>Alphaproteobacteria</taxon>
        <taxon>Caulobacterales</taxon>
        <taxon>Caulobacteraceae</taxon>
        <taxon>Caulobacter</taxon>
    </lineage>
</organism>
<proteinExistence type="inferred from homology"/>
<evidence type="ECO:0000255" key="1">
    <source>
        <dbReference type="HAMAP-Rule" id="MF_00922"/>
    </source>
</evidence>
<name>BAMD_CAUVC</name>